<comment type="function">
    <text evidence="1">This enzyme is involved in nucleotide metabolism: it produces dUMP, the immediate precursor of thymidine nucleotides and it decreases the intracellular concentration of dUTP so that uracil cannot be incorporated into DNA.</text>
</comment>
<comment type="catalytic activity">
    <reaction evidence="1">
        <text>dUTP + H2O = dUMP + diphosphate + H(+)</text>
        <dbReference type="Rhea" id="RHEA:10248"/>
        <dbReference type="ChEBI" id="CHEBI:15377"/>
        <dbReference type="ChEBI" id="CHEBI:15378"/>
        <dbReference type="ChEBI" id="CHEBI:33019"/>
        <dbReference type="ChEBI" id="CHEBI:61555"/>
        <dbReference type="ChEBI" id="CHEBI:246422"/>
        <dbReference type="EC" id="3.6.1.23"/>
    </reaction>
</comment>
<comment type="cofactor">
    <cofactor evidence="1">
        <name>Mg(2+)</name>
        <dbReference type="ChEBI" id="CHEBI:18420"/>
    </cofactor>
</comment>
<comment type="pathway">
    <text evidence="1">Pyrimidine metabolism; dUMP biosynthesis; dUMP from dCTP (dUTP route): step 2/2.</text>
</comment>
<comment type="similarity">
    <text evidence="1">Belongs to the dUTPase family.</text>
</comment>
<accession>Q9A253</accession>
<name>DUT_CAUVC</name>
<sequence length="155" mass="16215">MSAIPAGLAIRFKRWEGNADLPVPAYATVGAAGFDLRAHVPDDAPIVLKPGARCMAPTGFSVAIPDGYEMQVRPRSGLALKNGVTVVNAPGTVDSDYRGQVCVLLINLGEEDFTIRRGDRIAQGVIAAAPQWPLVEVEDLDATERGAGGFGSTGV</sequence>
<keyword id="KW-0378">Hydrolase</keyword>
<keyword id="KW-0460">Magnesium</keyword>
<keyword id="KW-0479">Metal-binding</keyword>
<keyword id="KW-0546">Nucleotide metabolism</keyword>
<keyword id="KW-1185">Reference proteome</keyword>
<feature type="chain" id="PRO_0000182843" description="Deoxyuridine 5'-triphosphate nucleotidohydrolase">
    <location>
        <begin position="1"/>
        <end position="155"/>
    </location>
</feature>
<feature type="binding site" evidence="1">
    <location>
        <begin position="75"/>
        <end position="77"/>
    </location>
    <ligand>
        <name>substrate</name>
    </ligand>
</feature>
<feature type="binding site" evidence="1">
    <location>
        <position position="88"/>
    </location>
    <ligand>
        <name>substrate</name>
    </ligand>
</feature>
<feature type="binding site" evidence="1">
    <location>
        <begin position="92"/>
        <end position="94"/>
    </location>
    <ligand>
        <name>substrate</name>
    </ligand>
</feature>
<gene>
    <name evidence="1" type="primary">dut</name>
    <name type="ordered locus">CC_3713</name>
</gene>
<reference key="1">
    <citation type="journal article" date="2001" name="Proc. Natl. Acad. Sci. U.S.A.">
        <title>Complete genome sequence of Caulobacter crescentus.</title>
        <authorList>
            <person name="Nierman W.C."/>
            <person name="Feldblyum T.V."/>
            <person name="Laub M.T."/>
            <person name="Paulsen I.T."/>
            <person name="Nelson K.E."/>
            <person name="Eisen J.A."/>
            <person name="Heidelberg J.F."/>
            <person name="Alley M.R.K."/>
            <person name="Ohta N."/>
            <person name="Maddock J.R."/>
            <person name="Potocka I."/>
            <person name="Nelson W.C."/>
            <person name="Newton A."/>
            <person name="Stephens C."/>
            <person name="Phadke N.D."/>
            <person name="Ely B."/>
            <person name="DeBoy R.T."/>
            <person name="Dodson R.J."/>
            <person name="Durkin A.S."/>
            <person name="Gwinn M.L."/>
            <person name="Haft D.H."/>
            <person name="Kolonay J.F."/>
            <person name="Smit J."/>
            <person name="Craven M.B."/>
            <person name="Khouri H.M."/>
            <person name="Shetty J."/>
            <person name="Berry K.J."/>
            <person name="Utterback T.R."/>
            <person name="Tran K."/>
            <person name="Wolf A.M."/>
            <person name="Vamathevan J.J."/>
            <person name="Ermolaeva M.D."/>
            <person name="White O."/>
            <person name="Salzberg S.L."/>
            <person name="Venter J.C."/>
            <person name="Shapiro L."/>
            <person name="Fraser C.M."/>
        </authorList>
    </citation>
    <scope>NUCLEOTIDE SEQUENCE [LARGE SCALE GENOMIC DNA]</scope>
    <source>
        <strain>ATCC 19089 / CIP 103742 / CB 15</strain>
    </source>
</reference>
<organism>
    <name type="scientific">Caulobacter vibrioides (strain ATCC 19089 / CIP 103742 / CB 15)</name>
    <name type="common">Caulobacter crescentus</name>
    <dbReference type="NCBI Taxonomy" id="190650"/>
    <lineage>
        <taxon>Bacteria</taxon>
        <taxon>Pseudomonadati</taxon>
        <taxon>Pseudomonadota</taxon>
        <taxon>Alphaproteobacteria</taxon>
        <taxon>Caulobacterales</taxon>
        <taxon>Caulobacteraceae</taxon>
        <taxon>Caulobacter</taxon>
    </lineage>
</organism>
<dbReference type="EC" id="3.6.1.23" evidence="1"/>
<dbReference type="EMBL" id="AE005673">
    <property type="protein sequence ID" value="AAK25675.1"/>
    <property type="molecule type" value="Genomic_DNA"/>
</dbReference>
<dbReference type="PIR" id="G87709">
    <property type="entry name" value="G87709"/>
</dbReference>
<dbReference type="RefSeq" id="NP_422507.1">
    <property type="nucleotide sequence ID" value="NC_002696.2"/>
</dbReference>
<dbReference type="RefSeq" id="WP_010921540.1">
    <property type="nucleotide sequence ID" value="NC_002696.2"/>
</dbReference>
<dbReference type="SMR" id="Q9A253"/>
<dbReference type="STRING" id="190650.CC_3713"/>
<dbReference type="EnsemblBacteria" id="AAK25675">
    <property type="protein sequence ID" value="AAK25675"/>
    <property type="gene ID" value="CC_3713"/>
</dbReference>
<dbReference type="KEGG" id="ccr:CC_3713"/>
<dbReference type="PATRIC" id="fig|190650.5.peg.3714"/>
<dbReference type="eggNOG" id="COG0756">
    <property type="taxonomic scope" value="Bacteria"/>
</dbReference>
<dbReference type="HOGENOM" id="CLU_068508_1_2_5"/>
<dbReference type="BioCyc" id="CAULO:CC3713-MONOMER"/>
<dbReference type="UniPathway" id="UPA00610">
    <property type="reaction ID" value="UER00666"/>
</dbReference>
<dbReference type="Proteomes" id="UP000001816">
    <property type="component" value="Chromosome"/>
</dbReference>
<dbReference type="GO" id="GO:0004170">
    <property type="term" value="F:dUTP diphosphatase activity"/>
    <property type="evidence" value="ECO:0007669"/>
    <property type="project" value="UniProtKB-UniRule"/>
</dbReference>
<dbReference type="GO" id="GO:0000287">
    <property type="term" value="F:magnesium ion binding"/>
    <property type="evidence" value="ECO:0007669"/>
    <property type="project" value="UniProtKB-UniRule"/>
</dbReference>
<dbReference type="GO" id="GO:0006226">
    <property type="term" value="P:dUMP biosynthetic process"/>
    <property type="evidence" value="ECO:0007669"/>
    <property type="project" value="UniProtKB-UniRule"/>
</dbReference>
<dbReference type="GO" id="GO:0046081">
    <property type="term" value="P:dUTP catabolic process"/>
    <property type="evidence" value="ECO:0007669"/>
    <property type="project" value="InterPro"/>
</dbReference>
<dbReference type="CDD" id="cd07557">
    <property type="entry name" value="trimeric_dUTPase"/>
    <property type="match status" value="1"/>
</dbReference>
<dbReference type="Gene3D" id="2.70.40.10">
    <property type="match status" value="1"/>
</dbReference>
<dbReference type="HAMAP" id="MF_00116">
    <property type="entry name" value="dUTPase_bact"/>
    <property type="match status" value="1"/>
</dbReference>
<dbReference type="InterPro" id="IPR008181">
    <property type="entry name" value="dUTPase"/>
</dbReference>
<dbReference type="InterPro" id="IPR029054">
    <property type="entry name" value="dUTPase-like"/>
</dbReference>
<dbReference type="InterPro" id="IPR036157">
    <property type="entry name" value="dUTPase-like_sf"/>
</dbReference>
<dbReference type="InterPro" id="IPR033704">
    <property type="entry name" value="dUTPase_trimeric"/>
</dbReference>
<dbReference type="NCBIfam" id="TIGR00576">
    <property type="entry name" value="dut"/>
    <property type="match status" value="1"/>
</dbReference>
<dbReference type="NCBIfam" id="NF001862">
    <property type="entry name" value="PRK00601.1"/>
    <property type="match status" value="1"/>
</dbReference>
<dbReference type="PANTHER" id="PTHR11241">
    <property type="entry name" value="DEOXYURIDINE 5'-TRIPHOSPHATE NUCLEOTIDOHYDROLASE"/>
    <property type="match status" value="1"/>
</dbReference>
<dbReference type="PANTHER" id="PTHR11241:SF0">
    <property type="entry name" value="DEOXYURIDINE 5'-TRIPHOSPHATE NUCLEOTIDOHYDROLASE"/>
    <property type="match status" value="1"/>
</dbReference>
<dbReference type="Pfam" id="PF00692">
    <property type="entry name" value="dUTPase"/>
    <property type="match status" value="1"/>
</dbReference>
<dbReference type="SUPFAM" id="SSF51283">
    <property type="entry name" value="dUTPase-like"/>
    <property type="match status" value="1"/>
</dbReference>
<protein>
    <recommendedName>
        <fullName evidence="1">Deoxyuridine 5'-triphosphate nucleotidohydrolase</fullName>
        <shortName evidence="1">dUTPase</shortName>
        <ecNumber evidence="1">3.6.1.23</ecNumber>
    </recommendedName>
    <alternativeName>
        <fullName evidence="1">dUTP pyrophosphatase</fullName>
    </alternativeName>
</protein>
<evidence type="ECO:0000255" key="1">
    <source>
        <dbReference type="HAMAP-Rule" id="MF_00116"/>
    </source>
</evidence>
<proteinExistence type="inferred from homology"/>